<proteinExistence type="evidence at transcript level"/>
<keyword id="KW-0256">Endoplasmic reticulum</keyword>
<keyword id="KW-0349">Heme</keyword>
<keyword id="KW-0408">Iron</keyword>
<keyword id="KW-0472">Membrane</keyword>
<keyword id="KW-0479">Metal-binding</keyword>
<keyword id="KW-0492">Microsome</keyword>
<keyword id="KW-0503">Monooxygenase</keyword>
<keyword id="KW-0560">Oxidoreductase</keyword>
<keyword id="KW-1185">Reference proteome</keyword>
<protein>
    <recommendedName>
        <fullName>Probable cytochrome P450 6d2</fullName>
        <ecNumber>1.14.-.-</ecNumber>
    </recommendedName>
    <alternativeName>
        <fullName>CYPVID2</fullName>
    </alternativeName>
</protein>
<sequence length="512" mass="58679">MWTILLTILIAGLLYRYVKRHYTHWQRLGVDEEPAKIPFGVMDTVMKQERSLGMALADIYARHEGKIVGIYMLNKRSILIRDAQLARQIMTSDFASFHDRGVYVDEDKDPLSANLFNLRGASWRNLRQKLTPSFSSGKIKGMFGTIDDVGDKLVQHLEGALDQSDEVEIKDVMTTYAVDIIGSVIFGLEIDSFRNPKNEFREISSSTSRDESLLLKIHNMSMFICPPIAKLMNRLGYESRILTSLRDMMKRTIEFREEHNVVRKDMLQLLIRLRNTGKIGEDDDQVWDMETAQEQLKSMSIEKIAAQAFLFYVAGSESTAAASAFTLYELSMYPELLKEAQEEVDAVLMKHNLKPKDRFTYEAVQDLKFLDICIMETIRKYPGLPFLNRECTEDYPVPGTNHIIAKGTPILISLFGMQRDPVYFPNPNGYDPHRFDSNNMNYDQAAYMPFGEGPRHCIALRMGKVNSKVAVAKILANFDLVQSPRKEVEFRFDAAPVLVTKEPLKLRLTKRK</sequence>
<accession>Q9W223</accession>
<comment type="function">
    <text evidence="1">May be involved in the metabolism of insect hormones and in the breakdown of synthetic insecticides.</text>
</comment>
<comment type="cofactor">
    <cofactor evidence="1">
        <name>heme</name>
        <dbReference type="ChEBI" id="CHEBI:30413"/>
    </cofactor>
</comment>
<comment type="subcellular location">
    <subcellularLocation>
        <location evidence="2">Endoplasmic reticulum membrane</location>
        <topology evidence="2">Peripheral membrane protein</topology>
    </subcellularLocation>
    <subcellularLocation>
        <location evidence="2">Microsome membrane</location>
        <topology evidence="2">Peripheral membrane protein</topology>
    </subcellularLocation>
</comment>
<comment type="similarity">
    <text evidence="2">Belongs to the cytochrome P450 family.</text>
</comment>
<name>CP6D2_DROME</name>
<organism>
    <name type="scientific">Drosophila melanogaster</name>
    <name type="common">Fruit fly</name>
    <dbReference type="NCBI Taxonomy" id="7227"/>
    <lineage>
        <taxon>Eukaryota</taxon>
        <taxon>Metazoa</taxon>
        <taxon>Ecdysozoa</taxon>
        <taxon>Arthropoda</taxon>
        <taxon>Hexapoda</taxon>
        <taxon>Insecta</taxon>
        <taxon>Pterygota</taxon>
        <taxon>Neoptera</taxon>
        <taxon>Endopterygota</taxon>
        <taxon>Diptera</taxon>
        <taxon>Brachycera</taxon>
        <taxon>Muscomorpha</taxon>
        <taxon>Ephydroidea</taxon>
        <taxon>Drosophilidae</taxon>
        <taxon>Drosophila</taxon>
        <taxon>Sophophora</taxon>
    </lineage>
</organism>
<dbReference type="EC" id="1.14.-.-"/>
<dbReference type="EMBL" id="AE013599">
    <property type="protein sequence ID" value="AAF46877.1"/>
    <property type="molecule type" value="Genomic_DNA"/>
</dbReference>
<dbReference type="EMBL" id="BT009998">
    <property type="protein sequence ID" value="AAQ22467.1"/>
    <property type="molecule type" value="mRNA"/>
</dbReference>
<dbReference type="RefSeq" id="NP_611698.1">
    <property type="nucleotide sequence ID" value="NM_137854.3"/>
</dbReference>
<dbReference type="SMR" id="Q9W223"/>
<dbReference type="FunCoup" id="Q9W223">
    <property type="interactions" value="25"/>
</dbReference>
<dbReference type="IntAct" id="Q9W223">
    <property type="interactions" value="1"/>
</dbReference>
<dbReference type="STRING" id="7227.FBpp0071839"/>
<dbReference type="PaxDb" id="7227-FBpp0071839"/>
<dbReference type="DNASU" id="37594"/>
<dbReference type="EnsemblMetazoa" id="FBtr0071928">
    <property type="protein sequence ID" value="FBpp0071839"/>
    <property type="gene ID" value="FBgn0034756"/>
</dbReference>
<dbReference type="GeneID" id="37594"/>
<dbReference type="KEGG" id="dme:Dmel_CG4373"/>
<dbReference type="UCSC" id="CG4373-RA">
    <property type="organism name" value="d. melanogaster"/>
</dbReference>
<dbReference type="AGR" id="FB:FBgn0034756"/>
<dbReference type="CTD" id="37594"/>
<dbReference type="FlyBase" id="FBgn0034756">
    <property type="gene designation" value="Cyp6d2"/>
</dbReference>
<dbReference type="VEuPathDB" id="VectorBase:FBgn0034756"/>
<dbReference type="eggNOG" id="KOG0158">
    <property type="taxonomic scope" value="Eukaryota"/>
</dbReference>
<dbReference type="GeneTree" id="ENSGT00940000168877"/>
<dbReference type="HOGENOM" id="CLU_001570_5_2_1"/>
<dbReference type="InParanoid" id="Q9W223"/>
<dbReference type="OMA" id="KIPFGVM"/>
<dbReference type="OrthoDB" id="2789670at2759"/>
<dbReference type="PhylomeDB" id="Q9W223"/>
<dbReference type="BioGRID-ORCS" id="37594">
    <property type="hits" value="0 hits in 1 CRISPR screen"/>
</dbReference>
<dbReference type="GenomeRNAi" id="37594"/>
<dbReference type="PRO" id="PR:Q9W223"/>
<dbReference type="Proteomes" id="UP000000803">
    <property type="component" value="Chromosome 2R"/>
</dbReference>
<dbReference type="Bgee" id="FBgn0034756">
    <property type="expression patterns" value="Expressed in fat body cell in arthropod fat body and 28 other cell types or tissues"/>
</dbReference>
<dbReference type="GO" id="GO:0005789">
    <property type="term" value="C:endoplasmic reticulum membrane"/>
    <property type="evidence" value="ECO:0007669"/>
    <property type="project" value="UniProtKB-SubCell"/>
</dbReference>
<dbReference type="GO" id="GO:0020037">
    <property type="term" value="F:heme binding"/>
    <property type="evidence" value="ECO:0007669"/>
    <property type="project" value="InterPro"/>
</dbReference>
<dbReference type="GO" id="GO:0005506">
    <property type="term" value="F:iron ion binding"/>
    <property type="evidence" value="ECO:0007669"/>
    <property type="project" value="InterPro"/>
</dbReference>
<dbReference type="GO" id="GO:0004497">
    <property type="term" value="F:monooxygenase activity"/>
    <property type="evidence" value="ECO:0007669"/>
    <property type="project" value="UniProtKB-KW"/>
</dbReference>
<dbReference type="GO" id="GO:0016705">
    <property type="term" value="F:oxidoreductase activity, acting on paired donors, with incorporation or reduction of molecular oxygen"/>
    <property type="evidence" value="ECO:0007669"/>
    <property type="project" value="InterPro"/>
</dbReference>
<dbReference type="GO" id="GO:1901563">
    <property type="term" value="P:response to camptothecin"/>
    <property type="evidence" value="ECO:0000315"/>
    <property type="project" value="FlyBase"/>
</dbReference>
<dbReference type="CDD" id="cd11056">
    <property type="entry name" value="CYP6-like"/>
    <property type="match status" value="1"/>
</dbReference>
<dbReference type="FunFam" id="1.10.630.10:FF:000199">
    <property type="entry name" value="Probable cytochrome P450 6d2"/>
    <property type="match status" value="1"/>
</dbReference>
<dbReference type="Gene3D" id="1.10.630.10">
    <property type="entry name" value="Cytochrome P450"/>
    <property type="match status" value="1"/>
</dbReference>
<dbReference type="InterPro" id="IPR001128">
    <property type="entry name" value="Cyt_P450"/>
</dbReference>
<dbReference type="InterPro" id="IPR017972">
    <property type="entry name" value="Cyt_P450_CS"/>
</dbReference>
<dbReference type="InterPro" id="IPR002401">
    <property type="entry name" value="Cyt_P450_E_grp-I"/>
</dbReference>
<dbReference type="InterPro" id="IPR036396">
    <property type="entry name" value="Cyt_P450_sf"/>
</dbReference>
<dbReference type="InterPro" id="IPR050476">
    <property type="entry name" value="Insect_CytP450_Detox"/>
</dbReference>
<dbReference type="PANTHER" id="PTHR24292">
    <property type="entry name" value="CYTOCHROME P450"/>
    <property type="match status" value="1"/>
</dbReference>
<dbReference type="PANTHER" id="PTHR24292:SF93">
    <property type="entry name" value="CYTOCHROME P450 310A1-RELATED"/>
    <property type="match status" value="1"/>
</dbReference>
<dbReference type="Pfam" id="PF00067">
    <property type="entry name" value="p450"/>
    <property type="match status" value="1"/>
</dbReference>
<dbReference type="PRINTS" id="PR00463">
    <property type="entry name" value="EP450I"/>
</dbReference>
<dbReference type="PRINTS" id="PR00385">
    <property type="entry name" value="P450"/>
</dbReference>
<dbReference type="SUPFAM" id="SSF48264">
    <property type="entry name" value="Cytochrome P450"/>
    <property type="match status" value="1"/>
</dbReference>
<dbReference type="PROSITE" id="PS00086">
    <property type="entry name" value="CYTOCHROME_P450"/>
    <property type="match status" value="1"/>
</dbReference>
<evidence type="ECO:0000250" key="1"/>
<evidence type="ECO:0000305" key="2"/>
<feature type="chain" id="PRO_0000051880" description="Probable cytochrome P450 6d2">
    <location>
        <begin position="1"/>
        <end position="512"/>
    </location>
</feature>
<feature type="binding site" description="axial binding residue" evidence="1">
    <location>
        <position position="457"/>
    </location>
    <ligand>
        <name>heme</name>
        <dbReference type="ChEBI" id="CHEBI:30413"/>
    </ligand>
    <ligandPart>
        <name>Fe</name>
        <dbReference type="ChEBI" id="CHEBI:18248"/>
    </ligandPart>
</feature>
<gene>
    <name type="primary">Cyp6d2</name>
    <name type="ORF">CG4373</name>
</gene>
<reference key="1">
    <citation type="journal article" date="2000" name="Science">
        <title>The genome sequence of Drosophila melanogaster.</title>
        <authorList>
            <person name="Adams M.D."/>
            <person name="Celniker S.E."/>
            <person name="Holt R.A."/>
            <person name="Evans C.A."/>
            <person name="Gocayne J.D."/>
            <person name="Amanatides P.G."/>
            <person name="Scherer S.E."/>
            <person name="Li P.W."/>
            <person name="Hoskins R.A."/>
            <person name="Galle R.F."/>
            <person name="George R.A."/>
            <person name="Lewis S.E."/>
            <person name="Richards S."/>
            <person name="Ashburner M."/>
            <person name="Henderson S.N."/>
            <person name="Sutton G.G."/>
            <person name="Wortman J.R."/>
            <person name="Yandell M.D."/>
            <person name="Zhang Q."/>
            <person name="Chen L.X."/>
            <person name="Brandon R.C."/>
            <person name="Rogers Y.-H.C."/>
            <person name="Blazej R.G."/>
            <person name="Champe M."/>
            <person name="Pfeiffer B.D."/>
            <person name="Wan K.H."/>
            <person name="Doyle C."/>
            <person name="Baxter E.G."/>
            <person name="Helt G."/>
            <person name="Nelson C.R."/>
            <person name="Miklos G.L.G."/>
            <person name="Abril J.F."/>
            <person name="Agbayani A."/>
            <person name="An H.-J."/>
            <person name="Andrews-Pfannkoch C."/>
            <person name="Baldwin D."/>
            <person name="Ballew R.M."/>
            <person name="Basu A."/>
            <person name="Baxendale J."/>
            <person name="Bayraktaroglu L."/>
            <person name="Beasley E.M."/>
            <person name="Beeson K.Y."/>
            <person name="Benos P.V."/>
            <person name="Berman B.P."/>
            <person name="Bhandari D."/>
            <person name="Bolshakov S."/>
            <person name="Borkova D."/>
            <person name="Botchan M.R."/>
            <person name="Bouck J."/>
            <person name="Brokstein P."/>
            <person name="Brottier P."/>
            <person name="Burtis K.C."/>
            <person name="Busam D.A."/>
            <person name="Butler H."/>
            <person name="Cadieu E."/>
            <person name="Center A."/>
            <person name="Chandra I."/>
            <person name="Cherry J.M."/>
            <person name="Cawley S."/>
            <person name="Dahlke C."/>
            <person name="Davenport L.B."/>
            <person name="Davies P."/>
            <person name="de Pablos B."/>
            <person name="Delcher A."/>
            <person name="Deng Z."/>
            <person name="Mays A.D."/>
            <person name="Dew I."/>
            <person name="Dietz S.M."/>
            <person name="Dodson K."/>
            <person name="Doup L.E."/>
            <person name="Downes M."/>
            <person name="Dugan-Rocha S."/>
            <person name="Dunkov B.C."/>
            <person name="Dunn P."/>
            <person name="Durbin K.J."/>
            <person name="Evangelista C.C."/>
            <person name="Ferraz C."/>
            <person name="Ferriera S."/>
            <person name="Fleischmann W."/>
            <person name="Fosler C."/>
            <person name="Gabrielian A.E."/>
            <person name="Garg N.S."/>
            <person name="Gelbart W.M."/>
            <person name="Glasser K."/>
            <person name="Glodek A."/>
            <person name="Gong F."/>
            <person name="Gorrell J.H."/>
            <person name="Gu Z."/>
            <person name="Guan P."/>
            <person name="Harris M."/>
            <person name="Harris N.L."/>
            <person name="Harvey D.A."/>
            <person name="Heiman T.J."/>
            <person name="Hernandez J.R."/>
            <person name="Houck J."/>
            <person name="Hostin D."/>
            <person name="Houston K.A."/>
            <person name="Howland T.J."/>
            <person name="Wei M.-H."/>
            <person name="Ibegwam C."/>
            <person name="Jalali M."/>
            <person name="Kalush F."/>
            <person name="Karpen G.H."/>
            <person name="Ke Z."/>
            <person name="Kennison J.A."/>
            <person name="Ketchum K.A."/>
            <person name="Kimmel B.E."/>
            <person name="Kodira C.D."/>
            <person name="Kraft C.L."/>
            <person name="Kravitz S."/>
            <person name="Kulp D."/>
            <person name="Lai Z."/>
            <person name="Lasko P."/>
            <person name="Lei Y."/>
            <person name="Levitsky A.A."/>
            <person name="Li J.H."/>
            <person name="Li Z."/>
            <person name="Liang Y."/>
            <person name="Lin X."/>
            <person name="Liu X."/>
            <person name="Mattei B."/>
            <person name="McIntosh T.C."/>
            <person name="McLeod M.P."/>
            <person name="McPherson D."/>
            <person name="Merkulov G."/>
            <person name="Milshina N.V."/>
            <person name="Mobarry C."/>
            <person name="Morris J."/>
            <person name="Moshrefi A."/>
            <person name="Mount S.M."/>
            <person name="Moy M."/>
            <person name="Murphy B."/>
            <person name="Murphy L."/>
            <person name="Muzny D.M."/>
            <person name="Nelson D.L."/>
            <person name="Nelson D.R."/>
            <person name="Nelson K.A."/>
            <person name="Nixon K."/>
            <person name="Nusskern D.R."/>
            <person name="Pacleb J.M."/>
            <person name="Palazzolo M."/>
            <person name="Pittman G.S."/>
            <person name="Pan S."/>
            <person name="Pollard J."/>
            <person name="Puri V."/>
            <person name="Reese M.G."/>
            <person name="Reinert K."/>
            <person name="Remington K."/>
            <person name="Saunders R.D.C."/>
            <person name="Scheeler F."/>
            <person name="Shen H."/>
            <person name="Shue B.C."/>
            <person name="Siden-Kiamos I."/>
            <person name="Simpson M."/>
            <person name="Skupski M.P."/>
            <person name="Smith T.J."/>
            <person name="Spier E."/>
            <person name="Spradling A.C."/>
            <person name="Stapleton M."/>
            <person name="Strong R."/>
            <person name="Sun E."/>
            <person name="Svirskas R."/>
            <person name="Tector C."/>
            <person name="Turner R."/>
            <person name="Venter E."/>
            <person name="Wang A.H."/>
            <person name="Wang X."/>
            <person name="Wang Z.-Y."/>
            <person name="Wassarman D.A."/>
            <person name="Weinstock G.M."/>
            <person name="Weissenbach J."/>
            <person name="Williams S.M."/>
            <person name="Woodage T."/>
            <person name="Worley K.C."/>
            <person name="Wu D."/>
            <person name="Yang S."/>
            <person name="Yao Q.A."/>
            <person name="Ye J."/>
            <person name="Yeh R.-F."/>
            <person name="Zaveri J.S."/>
            <person name="Zhan M."/>
            <person name="Zhang G."/>
            <person name="Zhao Q."/>
            <person name="Zheng L."/>
            <person name="Zheng X.H."/>
            <person name="Zhong F.N."/>
            <person name="Zhong W."/>
            <person name="Zhou X."/>
            <person name="Zhu S.C."/>
            <person name="Zhu X."/>
            <person name="Smith H.O."/>
            <person name="Gibbs R.A."/>
            <person name="Myers E.W."/>
            <person name="Rubin G.M."/>
            <person name="Venter J.C."/>
        </authorList>
    </citation>
    <scope>NUCLEOTIDE SEQUENCE [LARGE SCALE GENOMIC DNA]</scope>
    <source>
        <strain>Berkeley</strain>
    </source>
</reference>
<reference key="2">
    <citation type="journal article" date="2002" name="Genome Biol.">
        <title>Annotation of the Drosophila melanogaster euchromatic genome: a systematic review.</title>
        <authorList>
            <person name="Misra S."/>
            <person name="Crosby M.A."/>
            <person name="Mungall C.J."/>
            <person name="Matthews B.B."/>
            <person name="Campbell K.S."/>
            <person name="Hradecky P."/>
            <person name="Huang Y."/>
            <person name="Kaminker J.S."/>
            <person name="Millburn G.H."/>
            <person name="Prochnik S.E."/>
            <person name="Smith C.D."/>
            <person name="Tupy J.L."/>
            <person name="Whitfield E.J."/>
            <person name="Bayraktaroglu L."/>
            <person name="Berman B.P."/>
            <person name="Bettencourt B.R."/>
            <person name="Celniker S.E."/>
            <person name="de Grey A.D.N.J."/>
            <person name="Drysdale R.A."/>
            <person name="Harris N.L."/>
            <person name="Richter J."/>
            <person name="Russo S."/>
            <person name="Schroeder A.J."/>
            <person name="Shu S.Q."/>
            <person name="Stapleton M."/>
            <person name="Yamada C."/>
            <person name="Ashburner M."/>
            <person name="Gelbart W.M."/>
            <person name="Rubin G.M."/>
            <person name="Lewis S.E."/>
        </authorList>
    </citation>
    <scope>GENOME REANNOTATION</scope>
    <source>
        <strain>Berkeley</strain>
    </source>
</reference>
<reference key="3">
    <citation type="submission" date="2003-08" db="EMBL/GenBank/DDBJ databases">
        <authorList>
            <person name="Stapleton M."/>
            <person name="Brokstein P."/>
            <person name="Hong L."/>
            <person name="Agbayani A."/>
            <person name="Carlson J.W."/>
            <person name="Champe M."/>
            <person name="Chavez C."/>
            <person name="Dorsett V."/>
            <person name="Dresnek D."/>
            <person name="Farfan D."/>
            <person name="Frise E."/>
            <person name="George R.A."/>
            <person name="Gonzalez M."/>
            <person name="Guarin H."/>
            <person name="Kronmiller B."/>
            <person name="Li P.W."/>
            <person name="Liao G."/>
            <person name="Miranda A."/>
            <person name="Mungall C.J."/>
            <person name="Nunoo J."/>
            <person name="Pacleb J.M."/>
            <person name="Paragas V."/>
            <person name="Park S."/>
            <person name="Patel S."/>
            <person name="Phouanenavong S."/>
            <person name="Wan K.H."/>
            <person name="Yu C."/>
            <person name="Lewis S.E."/>
            <person name="Rubin G.M."/>
            <person name="Celniker S.E."/>
        </authorList>
    </citation>
    <scope>NUCLEOTIDE SEQUENCE [LARGE SCALE MRNA]</scope>
    <source>
        <strain>Berkeley</strain>
        <tissue>Embryo</tissue>
    </source>
</reference>